<feature type="chain" id="PRO_0000267885" description="Large ribosomal subunit protein bL17">
    <location>
        <begin position="1"/>
        <end position="126"/>
    </location>
</feature>
<sequence length="126" mass="14461">MRHKNSGKKLNRTPSHRKALFRNMANELIKHGKICTTETKAKELRRIVEPLITLALRNDLHSRRLAFQSMGDHQLVKHLFNNVAPAFVNVPGGYTRITRLALRRKGDCAPMAMIEFTCQKIDEKSI</sequence>
<comment type="subunit">
    <text evidence="1">Part of the 50S ribosomal subunit. Contacts protein L32.</text>
</comment>
<comment type="similarity">
    <text evidence="1">Belongs to the bacterial ribosomal protein bL17 family.</text>
</comment>
<organism>
    <name type="scientific">Lawsonia intracellularis (strain PHE/MN1-00)</name>
    <dbReference type="NCBI Taxonomy" id="363253"/>
    <lineage>
        <taxon>Bacteria</taxon>
        <taxon>Pseudomonadati</taxon>
        <taxon>Thermodesulfobacteriota</taxon>
        <taxon>Desulfovibrionia</taxon>
        <taxon>Desulfovibrionales</taxon>
        <taxon>Desulfovibrionaceae</taxon>
        <taxon>Lawsonia</taxon>
    </lineage>
</organism>
<gene>
    <name evidence="1" type="primary">rplQ</name>
    <name type="ordered locus">LI0983</name>
</gene>
<accession>Q1MPP0</accession>
<keyword id="KW-1185">Reference proteome</keyword>
<keyword id="KW-0687">Ribonucleoprotein</keyword>
<keyword id="KW-0689">Ribosomal protein</keyword>
<reference key="1">
    <citation type="submission" date="2005-11" db="EMBL/GenBank/DDBJ databases">
        <title>The complete genome sequence of Lawsonia intracellularis: the causative agent of proliferative enteropathy.</title>
        <authorList>
            <person name="Kaur K."/>
            <person name="Zhang Q."/>
            <person name="Beckler D."/>
            <person name="Munir S."/>
            <person name="Li L."/>
            <person name="Kinsley K."/>
            <person name="Herron L."/>
            <person name="Peterson A."/>
            <person name="May B."/>
            <person name="Singh S."/>
            <person name="Gebhart C."/>
            <person name="Kapur V."/>
        </authorList>
    </citation>
    <scope>NUCLEOTIDE SEQUENCE [LARGE SCALE GENOMIC DNA]</scope>
    <source>
        <strain>PHE/MN1-00</strain>
    </source>
</reference>
<proteinExistence type="inferred from homology"/>
<dbReference type="EMBL" id="AM180252">
    <property type="protein sequence ID" value="CAJ55037.1"/>
    <property type="molecule type" value="Genomic_DNA"/>
</dbReference>
<dbReference type="RefSeq" id="WP_011527066.1">
    <property type="nucleotide sequence ID" value="NC_008011.1"/>
</dbReference>
<dbReference type="SMR" id="Q1MPP0"/>
<dbReference type="STRING" id="363253.LI0983"/>
<dbReference type="KEGG" id="lip:LI0983"/>
<dbReference type="eggNOG" id="COG0203">
    <property type="taxonomic scope" value="Bacteria"/>
</dbReference>
<dbReference type="HOGENOM" id="CLU_074407_2_0_7"/>
<dbReference type="OrthoDB" id="9809073at2"/>
<dbReference type="Proteomes" id="UP000002430">
    <property type="component" value="Chromosome"/>
</dbReference>
<dbReference type="GO" id="GO:0022625">
    <property type="term" value="C:cytosolic large ribosomal subunit"/>
    <property type="evidence" value="ECO:0007669"/>
    <property type="project" value="TreeGrafter"/>
</dbReference>
<dbReference type="GO" id="GO:0003735">
    <property type="term" value="F:structural constituent of ribosome"/>
    <property type="evidence" value="ECO:0007669"/>
    <property type="project" value="InterPro"/>
</dbReference>
<dbReference type="GO" id="GO:0006412">
    <property type="term" value="P:translation"/>
    <property type="evidence" value="ECO:0007669"/>
    <property type="project" value="UniProtKB-UniRule"/>
</dbReference>
<dbReference type="FunFam" id="3.90.1030.10:FF:000001">
    <property type="entry name" value="50S ribosomal protein L17"/>
    <property type="match status" value="1"/>
</dbReference>
<dbReference type="Gene3D" id="3.90.1030.10">
    <property type="entry name" value="Ribosomal protein L17"/>
    <property type="match status" value="1"/>
</dbReference>
<dbReference type="HAMAP" id="MF_01368">
    <property type="entry name" value="Ribosomal_bL17"/>
    <property type="match status" value="1"/>
</dbReference>
<dbReference type="InterPro" id="IPR000456">
    <property type="entry name" value="Ribosomal_bL17"/>
</dbReference>
<dbReference type="InterPro" id="IPR036373">
    <property type="entry name" value="Ribosomal_bL17_sf"/>
</dbReference>
<dbReference type="NCBIfam" id="TIGR00059">
    <property type="entry name" value="L17"/>
    <property type="match status" value="1"/>
</dbReference>
<dbReference type="PANTHER" id="PTHR14413:SF16">
    <property type="entry name" value="LARGE RIBOSOMAL SUBUNIT PROTEIN BL17M"/>
    <property type="match status" value="1"/>
</dbReference>
<dbReference type="PANTHER" id="PTHR14413">
    <property type="entry name" value="RIBOSOMAL PROTEIN L17"/>
    <property type="match status" value="1"/>
</dbReference>
<dbReference type="Pfam" id="PF01196">
    <property type="entry name" value="Ribosomal_L17"/>
    <property type="match status" value="1"/>
</dbReference>
<dbReference type="SUPFAM" id="SSF64263">
    <property type="entry name" value="Prokaryotic ribosomal protein L17"/>
    <property type="match status" value="1"/>
</dbReference>
<name>RL17_LAWIP</name>
<protein>
    <recommendedName>
        <fullName evidence="1">Large ribosomal subunit protein bL17</fullName>
    </recommendedName>
    <alternativeName>
        <fullName evidence="2">50S ribosomal protein L17</fullName>
    </alternativeName>
</protein>
<evidence type="ECO:0000255" key="1">
    <source>
        <dbReference type="HAMAP-Rule" id="MF_01368"/>
    </source>
</evidence>
<evidence type="ECO:0000305" key="2"/>